<accession>Q863K0</accession>
<dbReference type="EMBL" id="AY263970">
    <property type="protein sequence ID" value="AAP21769.1"/>
    <property type="molecule type" value="Genomic_DNA"/>
</dbReference>
<dbReference type="RefSeq" id="XP_004054876.1">
    <property type="nucleotide sequence ID" value="XM_004054828.2"/>
</dbReference>
<dbReference type="RefSeq" id="XP_004054877.1">
    <property type="nucleotide sequence ID" value="XM_004054829.5"/>
</dbReference>
<dbReference type="RefSeq" id="XP_004054878.1">
    <property type="nucleotide sequence ID" value="XM_004054830.2"/>
</dbReference>
<dbReference type="RefSeq" id="XP_004054879.1">
    <property type="nucleotide sequence ID" value="XM_004054831.2"/>
</dbReference>
<dbReference type="SMR" id="Q863K0"/>
<dbReference type="FunCoup" id="Q863K0">
    <property type="interactions" value="6"/>
</dbReference>
<dbReference type="GlyCosmos" id="Q863K0">
    <property type="glycosylation" value="2 sites, No reported glycans"/>
</dbReference>
<dbReference type="GeneID" id="101134658"/>
<dbReference type="KEGG" id="ggo:101134658"/>
<dbReference type="CTD" id="390443"/>
<dbReference type="eggNOG" id="ENOG502TDU6">
    <property type="taxonomic scope" value="Eukaryota"/>
</dbReference>
<dbReference type="HOGENOM" id="CLU_1464451_0_0_1"/>
<dbReference type="InParanoid" id="Q863K0"/>
<dbReference type="Proteomes" id="UP000001519">
    <property type="component" value="Unplaced"/>
</dbReference>
<dbReference type="GO" id="GO:0005576">
    <property type="term" value="C:extracellular region"/>
    <property type="evidence" value="ECO:0007669"/>
    <property type="project" value="UniProtKB-SubCell"/>
</dbReference>
<dbReference type="GO" id="GO:0003676">
    <property type="term" value="F:nucleic acid binding"/>
    <property type="evidence" value="ECO:0007669"/>
    <property type="project" value="InterPro"/>
</dbReference>
<dbReference type="GO" id="GO:0050830">
    <property type="term" value="P:defense response to Gram-positive bacterium"/>
    <property type="evidence" value="ECO:0000318"/>
    <property type="project" value="GO_Central"/>
</dbReference>
<dbReference type="CDD" id="cd00163">
    <property type="entry name" value="RNase_A"/>
    <property type="match status" value="1"/>
</dbReference>
<dbReference type="FunFam" id="3.10.130.10:FF:000003">
    <property type="entry name" value="Inactive ribonuclease-like protein 9"/>
    <property type="match status" value="1"/>
</dbReference>
<dbReference type="Gene3D" id="3.10.130.10">
    <property type="entry name" value="Ribonuclease A-like domain"/>
    <property type="match status" value="1"/>
</dbReference>
<dbReference type="InterPro" id="IPR001427">
    <property type="entry name" value="RNaseA"/>
</dbReference>
<dbReference type="InterPro" id="IPR036816">
    <property type="entry name" value="RNaseA-like_dom_sf"/>
</dbReference>
<dbReference type="InterPro" id="IPR023412">
    <property type="entry name" value="RNaseA_domain"/>
</dbReference>
<dbReference type="PANTHER" id="PTHR11437:SF14">
    <property type="entry name" value="INACTIVE RIBONUCLEASE-LIKE PROTEIN 9"/>
    <property type="match status" value="1"/>
</dbReference>
<dbReference type="PANTHER" id="PTHR11437">
    <property type="entry name" value="RIBONUCLEASE"/>
    <property type="match status" value="1"/>
</dbReference>
<dbReference type="Pfam" id="PF00074">
    <property type="entry name" value="RnaseA"/>
    <property type="match status" value="1"/>
</dbReference>
<dbReference type="SMART" id="SM00092">
    <property type="entry name" value="RNAse_Pc"/>
    <property type="match status" value="1"/>
</dbReference>
<dbReference type="SUPFAM" id="SSF54076">
    <property type="entry name" value="RNase A-like"/>
    <property type="match status" value="1"/>
</dbReference>
<organism>
    <name type="scientific">Gorilla gorilla gorilla</name>
    <name type="common">Western lowland gorilla</name>
    <dbReference type="NCBI Taxonomy" id="9595"/>
    <lineage>
        <taxon>Eukaryota</taxon>
        <taxon>Metazoa</taxon>
        <taxon>Chordata</taxon>
        <taxon>Craniata</taxon>
        <taxon>Vertebrata</taxon>
        <taxon>Euteleostomi</taxon>
        <taxon>Mammalia</taxon>
        <taxon>Eutheria</taxon>
        <taxon>Euarchontoglires</taxon>
        <taxon>Primates</taxon>
        <taxon>Haplorrhini</taxon>
        <taxon>Catarrhini</taxon>
        <taxon>Hominidae</taxon>
        <taxon>Gorilla</taxon>
    </lineage>
</organism>
<comment type="function">
    <text evidence="1">Does not exhibit any ribonuclease activity.</text>
</comment>
<comment type="subcellular location">
    <subcellularLocation>
        <location evidence="3">Secreted</location>
    </subcellularLocation>
</comment>
<comment type="similarity">
    <text evidence="3">Belongs to the pancreatic ribonuclease family.</text>
</comment>
<reference key="1">
    <citation type="submission" date="2003-03" db="EMBL/GenBank/DDBJ databases">
        <title>LOC122650 on chromosome 14p11.1 is related to the RNase A superfamily and is uniquely expressed in lung.</title>
        <authorList>
            <person name="Devor E.J."/>
            <person name="Moffat-Wilson K.A."/>
        </authorList>
    </citation>
    <scope>NUCLEOTIDE SEQUENCE [GENOMIC DNA]</scope>
</reference>
<protein>
    <recommendedName>
        <fullName>Inactive ribonuclease-like protein 9</fullName>
    </recommendedName>
</protein>
<feature type="signal peptide" evidence="2">
    <location>
        <begin position="1"/>
        <end position="26"/>
    </location>
</feature>
<feature type="chain" id="PRO_0000030950" description="Inactive ribonuclease-like protein 9">
    <location>
        <begin position="27"/>
        <end position="205"/>
    </location>
</feature>
<feature type="glycosylation site" description="N-linked (GlcNAc...) asparagine" evidence="2">
    <location>
        <position position="131"/>
    </location>
</feature>
<feature type="glycosylation site" description="N-linked (GlcNAc...) asparagine" evidence="2">
    <location>
        <position position="143"/>
    </location>
</feature>
<feature type="disulfide bond" evidence="1">
    <location>
        <begin position="98"/>
        <end position="153"/>
    </location>
</feature>
<feature type="disulfide bond" evidence="1">
    <location>
        <begin position="116"/>
        <end position="168"/>
    </location>
</feature>
<feature type="disulfide bond" evidence="1">
    <location>
        <begin position="123"/>
        <end position="130"/>
    </location>
</feature>
<name>RNAS9_GORGO</name>
<evidence type="ECO:0000250" key="1"/>
<evidence type="ECO:0000255" key="2"/>
<evidence type="ECO:0000305" key="3"/>
<gene>
    <name type="primary">RNASE9</name>
</gene>
<keyword id="KW-1015">Disulfide bond</keyword>
<keyword id="KW-0325">Glycoprotein</keyword>
<keyword id="KW-1185">Reference proteome</keyword>
<keyword id="KW-0964">Secreted</keyword>
<keyword id="KW-0732">Signal</keyword>
<sequence length="205" mass="24279">MMRTLITIHPLPLLLLLQQLLQPVQFQEVDTDFDFPEEDKKEEFEEYSEQFFSIGPTRPPTKEKVKRRVLIEPGMPLNHIEYCNHEIMGKNVYYKHRCVAEHYFLLMQYDELQKICYNRFVPCKNGIRKCNRSKGLVEGVYCNLTEAFEIPACKYESLYRKGYVLITCSWQNEMQKLIPHTINDLVEPPEHRSFLSEDGVFVIPP</sequence>
<proteinExistence type="inferred from homology"/>